<gene>
    <name type="ordered locus">RP409</name>
</gene>
<accession>Q9ZDC3</accession>
<feature type="chain" id="PRO_0000101365" description="Uncharacterized protein RP409">
    <location>
        <begin position="1"/>
        <end position="82"/>
    </location>
</feature>
<dbReference type="EMBL" id="AJ235271">
    <property type="protein sequence ID" value="CAA14866.1"/>
    <property type="molecule type" value="Genomic_DNA"/>
</dbReference>
<dbReference type="PIR" id="H71698">
    <property type="entry name" value="H71698"/>
</dbReference>
<dbReference type="RefSeq" id="NP_220790.1">
    <property type="nucleotide sequence ID" value="NC_000963.1"/>
</dbReference>
<dbReference type="RefSeq" id="WP_004597596.1">
    <property type="nucleotide sequence ID" value="NC_000963.1"/>
</dbReference>
<dbReference type="STRING" id="272947.gene:17555489"/>
<dbReference type="EnsemblBacteria" id="CAA14866">
    <property type="protein sequence ID" value="CAA14866"/>
    <property type="gene ID" value="CAA14866"/>
</dbReference>
<dbReference type="KEGG" id="rpr:RP409"/>
<dbReference type="PATRIC" id="fig|272947.5.peg.422"/>
<dbReference type="HOGENOM" id="CLU_2571642_0_0_5"/>
<dbReference type="OrthoDB" id="8478256at2"/>
<dbReference type="Proteomes" id="UP000002480">
    <property type="component" value="Chromosome"/>
</dbReference>
<dbReference type="PROSITE" id="PS51257">
    <property type="entry name" value="PROKAR_LIPOPROTEIN"/>
    <property type="match status" value="1"/>
</dbReference>
<sequence length="82" mass="9452">MKQIFLLFTLLFITSACSKKLKETLGLSTSGPNEYQVQRVKTLEAPPHYYLIDPRSNKTTYNNIKGKHELNEGEQALMHDMH</sequence>
<proteinExistence type="predicted"/>
<keyword id="KW-1185">Reference proteome</keyword>
<name>Y409_RICPR</name>
<protein>
    <recommendedName>
        <fullName>Uncharacterized protein RP409</fullName>
    </recommendedName>
</protein>
<organism>
    <name type="scientific">Rickettsia prowazekii (strain Madrid E)</name>
    <dbReference type="NCBI Taxonomy" id="272947"/>
    <lineage>
        <taxon>Bacteria</taxon>
        <taxon>Pseudomonadati</taxon>
        <taxon>Pseudomonadota</taxon>
        <taxon>Alphaproteobacteria</taxon>
        <taxon>Rickettsiales</taxon>
        <taxon>Rickettsiaceae</taxon>
        <taxon>Rickettsieae</taxon>
        <taxon>Rickettsia</taxon>
        <taxon>typhus group</taxon>
    </lineage>
</organism>
<reference key="1">
    <citation type="journal article" date="1998" name="Nature">
        <title>The genome sequence of Rickettsia prowazekii and the origin of mitochondria.</title>
        <authorList>
            <person name="Andersson S.G.E."/>
            <person name="Zomorodipour A."/>
            <person name="Andersson J.O."/>
            <person name="Sicheritz-Ponten T."/>
            <person name="Alsmark U.C.M."/>
            <person name="Podowski R.M."/>
            <person name="Naeslund A.K."/>
            <person name="Eriksson A.-S."/>
            <person name="Winkler H.H."/>
            <person name="Kurland C.G."/>
        </authorList>
    </citation>
    <scope>NUCLEOTIDE SEQUENCE [LARGE SCALE GENOMIC DNA]</scope>
    <source>
        <strain>Madrid E</strain>
    </source>
</reference>